<proteinExistence type="inferred from homology"/>
<name>Y1392_CITK8</name>
<feature type="chain" id="PRO_1000064834" description="UPF0283 membrane protein CKO_01392">
    <location>
        <begin position="1"/>
        <end position="353"/>
    </location>
</feature>
<feature type="transmembrane region" description="Helical" evidence="1">
    <location>
        <begin position="70"/>
        <end position="90"/>
    </location>
</feature>
<feature type="transmembrane region" description="Helical" evidence="1">
    <location>
        <begin position="99"/>
        <end position="119"/>
    </location>
</feature>
<feature type="transmembrane region" description="Helical" evidence="1">
    <location>
        <begin position="213"/>
        <end position="233"/>
    </location>
</feature>
<reference key="1">
    <citation type="submission" date="2007-08" db="EMBL/GenBank/DDBJ databases">
        <authorList>
            <consortium name="The Citrobacter koseri Genome Sequencing Project"/>
            <person name="McClelland M."/>
            <person name="Sanderson E.K."/>
            <person name="Porwollik S."/>
            <person name="Spieth J."/>
            <person name="Clifton W.S."/>
            <person name="Latreille P."/>
            <person name="Courtney L."/>
            <person name="Wang C."/>
            <person name="Pepin K."/>
            <person name="Bhonagiri V."/>
            <person name="Nash W."/>
            <person name="Johnson M."/>
            <person name="Thiruvilangam P."/>
            <person name="Wilson R."/>
        </authorList>
    </citation>
    <scope>NUCLEOTIDE SEQUENCE [LARGE SCALE GENOMIC DNA]</scope>
    <source>
        <strain>ATCC BAA-895 / CDC 4225-83 / SGSC4696</strain>
    </source>
</reference>
<comment type="subcellular location">
    <subcellularLocation>
        <location evidence="1">Cell inner membrane</location>
        <topology evidence="1">Multi-pass membrane protein</topology>
    </subcellularLocation>
</comment>
<comment type="similarity">
    <text evidence="1">Belongs to the UPF0283 family.</text>
</comment>
<evidence type="ECO:0000255" key="1">
    <source>
        <dbReference type="HAMAP-Rule" id="MF_01085"/>
    </source>
</evidence>
<dbReference type="EMBL" id="CP000822">
    <property type="protein sequence ID" value="ABV12528.1"/>
    <property type="molecule type" value="Genomic_DNA"/>
</dbReference>
<dbReference type="RefSeq" id="WP_012132270.1">
    <property type="nucleotide sequence ID" value="NC_009792.1"/>
</dbReference>
<dbReference type="SMR" id="A8AGB5"/>
<dbReference type="STRING" id="290338.CKO_01392"/>
<dbReference type="GeneID" id="45135485"/>
<dbReference type="KEGG" id="cko:CKO_01392"/>
<dbReference type="HOGENOM" id="CLU_057693_2_0_6"/>
<dbReference type="OrthoDB" id="958025at2"/>
<dbReference type="Proteomes" id="UP000008148">
    <property type="component" value="Chromosome"/>
</dbReference>
<dbReference type="GO" id="GO:0005886">
    <property type="term" value="C:plasma membrane"/>
    <property type="evidence" value="ECO:0007669"/>
    <property type="project" value="UniProtKB-SubCell"/>
</dbReference>
<dbReference type="HAMAP" id="MF_01085">
    <property type="entry name" value="UPF0283"/>
    <property type="match status" value="1"/>
</dbReference>
<dbReference type="InterPro" id="IPR021147">
    <property type="entry name" value="DUF697"/>
</dbReference>
<dbReference type="InterPro" id="IPR006507">
    <property type="entry name" value="UPF0283"/>
</dbReference>
<dbReference type="NCBIfam" id="TIGR01620">
    <property type="entry name" value="hyp_HI0043"/>
    <property type="match status" value="1"/>
</dbReference>
<dbReference type="PANTHER" id="PTHR39342">
    <property type="entry name" value="UPF0283 MEMBRANE PROTEIN YCJF"/>
    <property type="match status" value="1"/>
</dbReference>
<dbReference type="PANTHER" id="PTHR39342:SF1">
    <property type="entry name" value="UPF0283 MEMBRANE PROTEIN YCJF"/>
    <property type="match status" value="1"/>
</dbReference>
<dbReference type="Pfam" id="PF05128">
    <property type="entry name" value="DUF697"/>
    <property type="match status" value="1"/>
</dbReference>
<sequence length="353" mass="39346">MSEPLKPRIDFAGPLEVEQNQTLKTQQTFSETQAQTFAPAQVDEPLEDEGQAEAVIDAALRPKRSLWRKMVMGGLALFGVSVVGQGVQWTMNAWQTQDWVALGGCAAGALIIGAGVGSVATEWRRLWRLRQRAHERDEARDLLHSHGTGKGRAFCEKLAQQAGIDQSHPALQRWYASIHETQNDREVVSLYAQLVQPVLDAQARREISRSAAESTLMIAVSPLALVDMAFIAWRNLRLINRIATLYGIELGYYSRLRLFRLVLLNIAFAGASELVREVGMDWMSQDLAARLSARAAQGIGAGLLTARLGIKAMELCRPLPWIDDDKPRLGDFRRQLIVQVKETLQKSKTPREN</sequence>
<protein>
    <recommendedName>
        <fullName evidence="1">UPF0283 membrane protein CKO_01392</fullName>
    </recommendedName>
</protein>
<accession>A8AGB5</accession>
<keyword id="KW-0997">Cell inner membrane</keyword>
<keyword id="KW-1003">Cell membrane</keyword>
<keyword id="KW-0472">Membrane</keyword>
<keyword id="KW-1185">Reference proteome</keyword>
<keyword id="KW-0812">Transmembrane</keyword>
<keyword id="KW-1133">Transmembrane helix</keyword>
<organism>
    <name type="scientific">Citrobacter koseri (strain ATCC BAA-895 / CDC 4225-83 / SGSC4696)</name>
    <dbReference type="NCBI Taxonomy" id="290338"/>
    <lineage>
        <taxon>Bacteria</taxon>
        <taxon>Pseudomonadati</taxon>
        <taxon>Pseudomonadota</taxon>
        <taxon>Gammaproteobacteria</taxon>
        <taxon>Enterobacterales</taxon>
        <taxon>Enterobacteriaceae</taxon>
        <taxon>Citrobacter</taxon>
    </lineage>
</organism>
<gene>
    <name type="ordered locus">CKO_01392</name>
</gene>